<feature type="chain" id="PRO_1000085436" description="HTH-type transcriptional repressor NsrR">
    <location>
        <begin position="1"/>
        <end position="141"/>
    </location>
</feature>
<feature type="domain" description="HTH rrf2-type" evidence="1">
    <location>
        <begin position="2"/>
        <end position="129"/>
    </location>
</feature>
<feature type="DNA-binding region" description="H-T-H motif" evidence="1">
    <location>
        <begin position="28"/>
        <end position="51"/>
    </location>
</feature>
<feature type="binding site" evidence="1">
    <location>
        <position position="91"/>
    </location>
    <ligand>
        <name>[2Fe-2S] cluster</name>
        <dbReference type="ChEBI" id="CHEBI:190135"/>
    </ligand>
</feature>
<feature type="binding site" evidence="1">
    <location>
        <position position="96"/>
    </location>
    <ligand>
        <name>[2Fe-2S] cluster</name>
        <dbReference type="ChEBI" id="CHEBI:190135"/>
    </ligand>
</feature>
<feature type="binding site" evidence="1">
    <location>
        <position position="102"/>
    </location>
    <ligand>
        <name>[2Fe-2S] cluster</name>
        <dbReference type="ChEBI" id="CHEBI:190135"/>
    </ligand>
</feature>
<name>NSRR_SALPB</name>
<reference key="1">
    <citation type="submission" date="2007-11" db="EMBL/GenBank/DDBJ databases">
        <authorList>
            <consortium name="The Salmonella enterica serovar Paratyphi B Genome Sequencing Project"/>
            <person name="McClelland M."/>
            <person name="Sanderson E.K."/>
            <person name="Porwollik S."/>
            <person name="Spieth J."/>
            <person name="Clifton W.S."/>
            <person name="Fulton R."/>
            <person name="Cordes M."/>
            <person name="Wollam A."/>
            <person name="Shah N."/>
            <person name="Pepin K."/>
            <person name="Bhonagiri V."/>
            <person name="Nash W."/>
            <person name="Johnson M."/>
            <person name="Thiruvilangam P."/>
            <person name="Wilson R."/>
        </authorList>
    </citation>
    <scope>NUCLEOTIDE SEQUENCE [LARGE SCALE GENOMIC DNA]</scope>
    <source>
        <strain>ATCC BAA-1250 / SPB7</strain>
    </source>
</reference>
<evidence type="ECO:0000255" key="1">
    <source>
        <dbReference type="HAMAP-Rule" id="MF_01177"/>
    </source>
</evidence>
<dbReference type="EMBL" id="CP000886">
    <property type="protein sequence ID" value="ABX70769.1"/>
    <property type="molecule type" value="Genomic_DNA"/>
</dbReference>
<dbReference type="RefSeq" id="WP_001177632.1">
    <property type="nucleotide sequence ID" value="NC_010102.1"/>
</dbReference>
<dbReference type="SMR" id="A9N4Z2"/>
<dbReference type="KEGG" id="spq:SPAB_05500"/>
<dbReference type="PATRIC" id="fig|1016998.12.peg.5154"/>
<dbReference type="HOGENOM" id="CLU_107144_2_1_6"/>
<dbReference type="BioCyc" id="SENT1016998:SPAB_RS22445-MONOMER"/>
<dbReference type="Proteomes" id="UP000008556">
    <property type="component" value="Chromosome"/>
</dbReference>
<dbReference type="GO" id="GO:0005829">
    <property type="term" value="C:cytosol"/>
    <property type="evidence" value="ECO:0007669"/>
    <property type="project" value="TreeGrafter"/>
</dbReference>
<dbReference type="GO" id="GO:0051537">
    <property type="term" value="F:2 iron, 2 sulfur cluster binding"/>
    <property type="evidence" value="ECO:0007669"/>
    <property type="project" value="UniProtKB-KW"/>
</dbReference>
<dbReference type="GO" id="GO:0003700">
    <property type="term" value="F:DNA-binding transcription factor activity"/>
    <property type="evidence" value="ECO:0007669"/>
    <property type="project" value="UniProtKB-UniRule"/>
</dbReference>
<dbReference type="GO" id="GO:0003690">
    <property type="term" value="F:double-stranded DNA binding"/>
    <property type="evidence" value="ECO:0007669"/>
    <property type="project" value="UniProtKB-UniRule"/>
</dbReference>
<dbReference type="GO" id="GO:0005506">
    <property type="term" value="F:iron ion binding"/>
    <property type="evidence" value="ECO:0007669"/>
    <property type="project" value="UniProtKB-UniRule"/>
</dbReference>
<dbReference type="GO" id="GO:0045892">
    <property type="term" value="P:negative regulation of DNA-templated transcription"/>
    <property type="evidence" value="ECO:0007669"/>
    <property type="project" value="InterPro"/>
</dbReference>
<dbReference type="FunFam" id="1.10.10.10:FF:000105">
    <property type="entry name" value="HTH-type transcriptional repressor NsrR"/>
    <property type="match status" value="1"/>
</dbReference>
<dbReference type="Gene3D" id="1.10.10.10">
    <property type="entry name" value="Winged helix-like DNA-binding domain superfamily/Winged helix DNA-binding domain"/>
    <property type="match status" value="1"/>
</dbReference>
<dbReference type="HAMAP" id="MF_01177">
    <property type="entry name" value="HTH_type_NsrR"/>
    <property type="match status" value="1"/>
</dbReference>
<dbReference type="InterPro" id="IPR000944">
    <property type="entry name" value="Tscrpt_reg_Rrf2"/>
</dbReference>
<dbReference type="InterPro" id="IPR023761">
    <property type="entry name" value="Tscrpt_rep_HTH_NsrR"/>
</dbReference>
<dbReference type="InterPro" id="IPR036388">
    <property type="entry name" value="WH-like_DNA-bd_sf"/>
</dbReference>
<dbReference type="InterPro" id="IPR036390">
    <property type="entry name" value="WH_DNA-bd_sf"/>
</dbReference>
<dbReference type="NCBIfam" id="NF008240">
    <property type="entry name" value="PRK11014.1"/>
    <property type="match status" value="1"/>
</dbReference>
<dbReference type="NCBIfam" id="TIGR00738">
    <property type="entry name" value="rrf2_super"/>
    <property type="match status" value="1"/>
</dbReference>
<dbReference type="PANTHER" id="PTHR33221:SF4">
    <property type="entry name" value="HTH-TYPE TRANSCRIPTIONAL REPRESSOR NSRR"/>
    <property type="match status" value="1"/>
</dbReference>
<dbReference type="PANTHER" id="PTHR33221">
    <property type="entry name" value="WINGED HELIX-TURN-HELIX TRANSCRIPTIONAL REGULATOR, RRF2 FAMILY"/>
    <property type="match status" value="1"/>
</dbReference>
<dbReference type="Pfam" id="PF02082">
    <property type="entry name" value="Rrf2"/>
    <property type="match status" value="1"/>
</dbReference>
<dbReference type="SUPFAM" id="SSF46785">
    <property type="entry name" value="Winged helix' DNA-binding domain"/>
    <property type="match status" value="1"/>
</dbReference>
<dbReference type="PROSITE" id="PS51197">
    <property type="entry name" value="HTH_RRF2_2"/>
    <property type="match status" value="1"/>
</dbReference>
<sequence>MQLTSFTDYGLRALIYMASLPDGRMTSISEVTEVYGVSRNHMVKIINQLSRAGFVTAVRGKNGGIRLGKPANTICIGDVVRELEPLSLVNCSSEFCHITPACRLKQALSKAVQSFLKELDNYTLADLVEENQPLYKLLLVE</sequence>
<protein>
    <recommendedName>
        <fullName evidence="1">HTH-type transcriptional repressor NsrR</fullName>
    </recommendedName>
</protein>
<proteinExistence type="inferred from homology"/>
<accession>A9N4Z2</accession>
<keyword id="KW-0001">2Fe-2S</keyword>
<keyword id="KW-0238">DNA-binding</keyword>
<keyword id="KW-0408">Iron</keyword>
<keyword id="KW-0411">Iron-sulfur</keyword>
<keyword id="KW-0479">Metal-binding</keyword>
<keyword id="KW-0678">Repressor</keyword>
<keyword id="KW-0804">Transcription</keyword>
<keyword id="KW-0805">Transcription regulation</keyword>
<comment type="function">
    <text evidence="1">Nitric oxide-sensitive repressor of genes involved in protecting the cell against nitrosative stress. May require iron for activity.</text>
</comment>
<comment type="cofactor">
    <cofactor evidence="1">
        <name>[2Fe-2S] cluster</name>
        <dbReference type="ChEBI" id="CHEBI:190135"/>
    </cofactor>
    <text evidence="1">Binds 1 [2Fe-2S] cluster per subunit.</text>
</comment>
<organism>
    <name type="scientific">Salmonella paratyphi B (strain ATCC BAA-1250 / SPB7)</name>
    <dbReference type="NCBI Taxonomy" id="1016998"/>
    <lineage>
        <taxon>Bacteria</taxon>
        <taxon>Pseudomonadati</taxon>
        <taxon>Pseudomonadota</taxon>
        <taxon>Gammaproteobacteria</taxon>
        <taxon>Enterobacterales</taxon>
        <taxon>Enterobacteriaceae</taxon>
        <taxon>Salmonella</taxon>
    </lineage>
</organism>
<gene>
    <name evidence="1" type="primary">nsrR</name>
    <name type="ordered locus">SPAB_05500</name>
</gene>